<accession>Q12LR0</accession>
<reference key="1">
    <citation type="submission" date="2006-03" db="EMBL/GenBank/DDBJ databases">
        <title>Complete sequence of Shewanella denitrificans OS217.</title>
        <authorList>
            <consortium name="US DOE Joint Genome Institute"/>
            <person name="Copeland A."/>
            <person name="Lucas S."/>
            <person name="Lapidus A."/>
            <person name="Barry K."/>
            <person name="Detter J.C."/>
            <person name="Glavina del Rio T."/>
            <person name="Hammon N."/>
            <person name="Israni S."/>
            <person name="Dalin E."/>
            <person name="Tice H."/>
            <person name="Pitluck S."/>
            <person name="Brettin T."/>
            <person name="Bruce D."/>
            <person name="Han C."/>
            <person name="Tapia R."/>
            <person name="Gilna P."/>
            <person name="Kiss H."/>
            <person name="Schmutz J."/>
            <person name="Larimer F."/>
            <person name="Land M."/>
            <person name="Hauser L."/>
            <person name="Kyrpides N."/>
            <person name="Lykidis A."/>
            <person name="Richardson P."/>
        </authorList>
    </citation>
    <scope>NUCLEOTIDE SEQUENCE [LARGE SCALE GENOMIC DNA]</scope>
    <source>
        <strain>OS217 / ATCC BAA-1090 / DSM 15013</strain>
    </source>
</reference>
<organism>
    <name type="scientific">Shewanella denitrificans (strain OS217 / ATCC BAA-1090 / DSM 15013)</name>
    <dbReference type="NCBI Taxonomy" id="318161"/>
    <lineage>
        <taxon>Bacteria</taxon>
        <taxon>Pseudomonadati</taxon>
        <taxon>Pseudomonadota</taxon>
        <taxon>Gammaproteobacteria</taxon>
        <taxon>Alteromonadales</taxon>
        <taxon>Shewanellaceae</taxon>
        <taxon>Shewanella</taxon>
    </lineage>
</organism>
<proteinExistence type="inferred from homology"/>
<feature type="chain" id="PRO_1000062312" description="UPF0352 protein Sden_2336">
    <location>
        <begin position="1"/>
        <end position="70"/>
    </location>
</feature>
<keyword id="KW-1185">Reference proteome</keyword>
<protein>
    <recommendedName>
        <fullName evidence="1">UPF0352 protein Sden_2336</fullName>
    </recommendedName>
</protein>
<gene>
    <name type="ordered locus">Sden_2336</name>
</gene>
<dbReference type="EMBL" id="CP000302">
    <property type="protein sequence ID" value="ABE55616.1"/>
    <property type="molecule type" value="Genomic_DNA"/>
</dbReference>
<dbReference type="RefSeq" id="WP_011496767.1">
    <property type="nucleotide sequence ID" value="NC_007954.1"/>
</dbReference>
<dbReference type="SMR" id="Q12LR0"/>
<dbReference type="STRING" id="318161.Sden_2336"/>
<dbReference type="KEGG" id="sdn:Sden_2336"/>
<dbReference type="eggNOG" id="COG3082">
    <property type="taxonomic scope" value="Bacteria"/>
</dbReference>
<dbReference type="HOGENOM" id="CLU_175457_0_0_6"/>
<dbReference type="OrthoDB" id="5771474at2"/>
<dbReference type="Proteomes" id="UP000001982">
    <property type="component" value="Chromosome"/>
</dbReference>
<dbReference type="Gene3D" id="1.10.3390.10">
    <property type="entry name" value="YejL-like"/>
    <property type="match status" value="1"/>
</dbReference>
<dbReference type="HAMAP" id="MF_00816">
    <property type="entry name" value="UPF0352"/>
    <property type="match status" value="1"/>
</dbReference>
<dbReference type="InterPro" id="IPR009857">
    <property type="entry name" value="UPF0352"/>
</dbReference>
<dbReference type="InterPro" id="IPR023202">
    <property type="entry name" value="YejL_sf"/>
</dbReference>
<dbReference type="NCBIfam" id="NF010242">
    <property type="entry name" value="PRK13689.1"/>
    <property type="match status" value="1"/>
</dbReference>
<dbReference type="Pfam" id="PF07208">
    <property type="entry name" value="DUF1414"/>
    <property type="match status" value="1"/>
</dbReference>
<dbReference type="PIRSF" id="PIRSF006188">
    <property type="entry name" value="UCP006188"/>
    <property type="match status" value="1"/>
</dbReference>
<dbReference type="SUPFAM" id="SSF158651">
    <property type="entry name" value="YejL-like"/>
    <property type="match status" value="1"/>
</dbReference>
<evidence type="ECO:0000255" key="1">
    <source>
        <dbReference type="HAMAP-Rule" id="MF_00816"/>
    </source>
</evidence>
<sequence length="70" mass="7606">MAIQSKYTNTQVEALISELLAVLAKHQAPTDLSLMVLGNCVTHLLENKVPSESRQAVAEQFAKALVKSVK</sequence>
<comment type="similarity">
    <text evidence="1">Belongs to the UPF0352 family.</text>
</comment>
<name>Y2336_SHEDO</name>